<reference key="1">
    <citation type="journal article" date="1993" name="Infect. Immun.">
        <title>Molecular cloning, nucleotide sequence, and characterization of lppB, encoding an antigenic 40-kilodalton lipoprotein of Haemophilus somnus.</title>
        <authorList>
            <person name="Theisen M."/>
            <person name="Rioux C.R."/>
            <person name="Potter A.A."/>
        </authorList>
    </citation>
    <scope>NUCLEOTIDE SEQUENCE [GENOMIC DNA]</scope>
    <source>
        <strain>HS25</strain>
    </source>
</reference>
<name>Y703_HISSO</name>
<dbReference type="EMBL" id="L10653">
    <property type="protein sequence ID" value="AAA72347.1"/>
    <property type="molecule type" value="Genomic_DNA"/>
</dbReference>
<dbReference type="PIR" id="T09553">
    <property type="entry name" value="T09553"/>
</dbReference>
<dbReference type="RefSeq" id="WP_011609652.1">
    <property type="nucleotide sequence ID" value="NZ_SUKB01000008.1"/>
</dbReference>
<dbReference type="GeneID" id="31486779"/>
<dbReference type="OMA" id="RLYDWTM"/>
<dbReference type="OrthoDB" id="9810270at2"/>
<dbReference type="GO" id="GO:0005886">
    <property type="term" value="C:plasma membrane"/>
    <property type="evidence" value="ECO:0007669"/>
    <property type="project" value="TreeGrafter"/>
</dbReference>
<dbReference type="InterPro" id="IPR051311">
    <property type="entry name" value="DedA_domain"/>
</dbReference>
<dbReference type="InterPro" id="IPR032816">
    <property type="entry name" value="VTT_dom"/>
</dbReference>
<dbReference type="PANTHER" id="PTHR42709">
    <property type="entry name" value="ALKALINE PHOSPHATASE LIKE PROTEIN"/>
    <property type="match status" value="1"/>
</dbReference>
<dbReference type="PANTHER" id="PTHR42709:SF11">
    <property type="entry name" value="DEDA FAMILY PROTEIN"/>
    <property type="match status" value="1"/>
</dbReference>
<dbReference type="Pfam" id="PF09335">
    <property type="entry name" value="VTT_dom"/>
    <property type="match status" value="1"/>
</dbReference>
<proteinExistence type="predicted"/>
<organism>
    <name type="scientific">Histophilus somni</name>
    <name type="common">Haemophilus somnus</name>
    <dbReference type="NCBI Taxonomy" id="731"/>
    <lineage>
        <taxon>Bacteria</taxon>
        <taxon>Pseudomonadati</taxon>
        <taxon>Pseudomonadota</taxon>
        <taxon>Gammaproteobacteria</taxon>
        <taxon>Pasteurellales</taxon>
        <taxon>Pasteurellaceae</taxon>
        <taxon>Histophilus</taxon>
    </lineage>
</organism>
<sequence length="191" mass="21895">MKIFGTLYDKTMQWANHRFATFWLTFVSFIEAIFFPIPPDVMLIPMSINKPKCATKFAFYAAMASAIGGAIGYGLGYYAFDFIQSYIQQWGYQQHWETALSWFKEWGIWVVFVAGFSPIPYKIFTICAGVMQMAFLPFLLTAFISRIARFLLVTHLAAWSGKKFAAKLRQSIEFIGWSVVIIAIVVYLVLK</sequence>
<protein>
    <recommendedName>
        <fullName>Uncharacterized protein HI0703 homolog</fullName>
    </recommendedName>
</protein>
<feature type="chain" id="PRO_0000077947" description="Uncharacterized protein HI0703 homolog">
    <location>
        <begin position="1"/>
        <end position="191"/>
    </location>
</feature>
<accession>P36684</accession>